<sequence>MNSSNIRRIQNEYNKINNDKNLYADSFQINMVDENIFLWKVNIKGPENSLYENYNFELEIELSNDYPYSSPKVKFITPIQHMNVNDKGDICLNILKKDGWNASLNIISIIWSIIVLLDQPNPEDPFNSELASLYRNDKLSYDKKIRDYCKTHSKLWTF</sequence>
<organismHost>
    <name type="scientific">Acanthamoeba polyphaga</name>
    <name type="common">Amoeba</name>
    <dbReference type="NCBI Taxonomy" id="5757"/>
</organismHost>
<gene>
    <name type="primary">UBC</name>
    <name type="ordered locus">MIMI_L460</name>
</gene>
<organism>
    <name type="scientific">Acanthamoeba polyphaga mimivirus</name>
    <name type="common">APMV</name>
    <dbReference type="NCBI Taxonomy" id="212035"/>
    <lineage>
        <taxon>Viruses</taxon>
        <taxon>Varidnaviria</taxon>
        <taxon>Bamfordvirae</taxon>
        <taxon>Nucleocytoviricota</taxon>
        <taxon>Megaviricetes</taxon>
        <taxon>Imitervirales</taxon>
        <taxon>Mimiviridae</taxon>
        <taxon>Megamimivirinae</taxon>
        <taxon>Mimivirus</taxon>
        <taxon>Mimivirus bradfordmassiliense</taxon>
    </lineage>
</organism>
<accession>Q5UQC9</accession>
<keyword id="KW-0067">ATP-binding</keyword>
<keyword id="KW-0547">Nucleotide-binding</keyword>
<keyword id="KW-1185">Reference proteome</keyword>
<keyword id="KW-0808">Transferase</keyword>
<keyword id="KW-0833">Ubl conjugation pathway</keyword>
<reference key="1">
    <citation type="journal article" date="2004" name="Science">
        <title>The 1.2-megabase genome sequence of Mimivirus.</title>
        <authorList>
            <person name="Raoult D."/>
            <person name="Audic S."/>
            <person name="Robert C."/>
            <person name="Abergel C."/>
            <person name="Renesto P."/>
            <person name="Ogata H."/>
            <person name="La Scola B."/>
            <person name="Susan M."/>
            <person name="Claverie J.-M."/>
        </authorList>
    </citation>
    <scope>NUCLEOTIDE SEQUENCE [LARGE SCALE GENOMIC DNA]</scope>
    <source>
        <strain>Rowbotham-Bradford</strain>
    </source>
</reference>
<dbReference type="EC" id="2.3.2.23"/>
<dbReference type="EMBL" id="AY653733">
    <property type="protein sequence ID" value="AAV50726.1"/>
    <property type="molecule type" value="Genomic_DNA"/>
</dbReference>
<dbReference type="SMR" id="Q5UQC9"/>
<dbReference type="KEGG" id="vg:9925085"/>
<dbReference type="OrthoDB" id="17755at10239"/>
<dbReference type="UniPathway" id="UPA00143"/>
<dbReference type="Proteomes" id="UP000001134">
    <property type="component" value="Genome"/>
</dbReference>
<dbReference type="GO" id="GO:0005524">
    <property type="term" value="F:ATP binding"/>
    <property type="evidence" value="ECO:0007669"/>
    <property type="project" value="UniProtKB-KW"/>
</dbReference>
<dbReference type="GO" id="GO:0061631">
    <property type="term" value="F:ubiquitin conjugating enzyme activity"/>
    <property type="evidence" value="ECO:0007669"/>
    <property type="project" value="UniProtKB-EC"/>
</dbReference>
<dbReference type="GO" id="GO:0016567">
    <property type="term" value="P:protein ubiquitination"/>
    <property type="evidence" value="ECO:0007669"/>
    <property type="project" value="UniProtKB-UniPathway"/>
</dbReference>
<dbReference type="Gene3D" id="3.10.110.10">
    <property type="entry name" value="Ubiquitin Conjugating Enzyme"/>
    <property type="match status" value="1"/>
</dbReference>
<dbReference type="InterPro" id="IPR050113">
    <property type="entry name" value="Ub_conjugating_enzyme"/>
</dbReference>
<dbReference type="InterPro" id="IPR000608">
    <property type="entry name" value="UBQ-conjugat_E2_core"/>
</dbReference>
<dbReference type="InterPro" id="IPR016135">
    <property type="entry name" value="UBQ-conjugating_enzyme/RWD"/>
</dbReference>
<dbReference type="PANTHER" id="PTHR24067">
    <property type="entry name" value="UBIQUITIN-CONJUGATING ENZYME E2"/>
    <property type="match status" value="1"/>
</dbReference>
<dbReference type="Pfam" id="PF00179">
    <property type="entry name" value="UQ_con"/>
    <property type="match status" value="1"/>
</dbReference>
<dbReference type="SMART" id="SM00212">
    <property type="entry name" value="UBCc"/>
    <property type="match status" value="1"/>
</dbReference>
<dbReference type="SUPFAM" id="SSF54495">
    <property type="entry name" value="UBC-like"/>
    <property type="match status" value="1"/>
</dbReference>
<dbReference type="PROSITE" id="PS50127">
    <property type="entry name" value="UBC_2"/>
    <property type="match status" value="1"/>
</dbReference>
<comment type="function">
    <text evidence="1">Catalyzes the covalent attachment of ubiquitin to other proteins.</text>
</comment>
<comment type="catalytic activity">
    <reaction evidence="1">
        <text>S-ubiquitinyl-[E1 ubiquitin-activating enzyme]-L-cysteine + [E2 ubiquitin-conjugating enzyme]-L-cysteine = [E1 ubiquitin-activating enzyme]-L-cysteine + S-ubiquitinyl-[E2 ubiquitin-conjugating enzyme]-L-cysteine.</text>
        <dbReference type="EC" id="2.3.2.23"/>
    </reaction>
</comment>
<comment type="pathway">
    <text evidence="1">Protein modification; protein ubiquitination.</text>
</comment>
<comment type="similarity">
    <text evidence="1">Belongs to the ubiquitin-conjugating enzyme family.</text>
</comment>
<protein>
    <recommendedName>
        <fullName>Probable ubiquitin-conjugating enzyme E2 L460</fullName>
        <ecNumber>2.3.2.23</ecNumber>
    </recommendedName>
    <alternativeName>
        <fullName>E2 ubiquitin-conjugating enzyme L460</fullName>
    </alternativeName>
    <alternativeName>
        <fullName>Ubiquitin carrier protein</fullName>
    </alternativeName>
    <alternativeName>
        <fullName>Ubiquitin-protein ligase</fullName>
    </alternativeName>
</protein>
<evidence type="ECO:0000255" key="1">
    <source>
        <dbReference type="PROSITE-ProRule" id="PRU00388"/>
    </source>
</evidence>
<proteinExistence type="inferred from homology"/>
<feature type="chain" id="PRO_0000082593" description="Probable ubiquitin-conjugating enzyme E2 L460">
    <location>
        <begin position="1"/>
        <end position="158"/>
    </location>
</feature>
<feature type="domain" description="UBC core" evidence="1">
    <location>
        <begin position="4"/>
        <end position="154"/>
    </location>
</feature>
<feature type="active site" description="Glycyl thioester intermediate" evidence="1">
    <location>
        <position position="91"/>
    </location>
</feature>
<name>UBC1_MIMIV</name>